<evidence type="ECO:0000255" key="1">
    <source>
        <dbReference type="HAMAP-Rule" id="MF_00147"/>
    </source>
</evidence>
<reference key="1">
    <citation type="journal article" date="1999" name="Microbiology">
        <title>The glyceraldehyde-3-phosphate dehydrogenase of Clostridium acetobutylicum: isolation and purification of the enzyme, and sequencing and localization of the gap gene within a cluster of other glycolytic genes.</title>
        <authorList>
            <person name="Schreiber W."/>
            <person name="Durre P."/>
        </authorList>
    </citation>
    <scope>NUCLEOTIDE SEQUENCE [GENOMIC DNA]</scope>
    <source>
        <strain>ATCC 824 / DSM 792 / JCM 1419 / IAM 19013 / LMG 5710 / NBRC 13948 / NRRL B-527 / VKM B-1787 / 2291 / W</strain>
    </source>
</reference>
<reference key="2">
    <citation type="journal article" date="2001" name="J. Bacteriol.">
        <title>Genome sequence and comparative analysis of the solvent-producing bacterium Clostridium acetobutylicum.</title>
        <authorList>
            <person name="Noelling J."/>
            <person name="Breton G."/>
            <person name="Omelchenko M.V."/>
            <person name="Makarova K.S."/>
            <person name="Zeng Q."/>
            <person name="Gibson R."/>
            <person name="Lee H.M."/>
            <person name="Dubois J."/>
            <person name="Qiu D."/>
            <person name="Hitti J."/>
            <person name="Wolf Y.I."/>
            <person name="Tatusov R.L."/>
            <person name="Sabathe F."/>
            <person name="Doucette-Stamm L.A."/>
            <person name="Soucaille P."/>
            <person name="Daly M.J."/>
            <person name="Bennett G.N."/>
            <person name="Koonin E.V."/>
            <person name="Smith D.R."/>
        </authorList>
    </citation>
    <scope>NUCLEOTIDE SEQUENCE [LARGE SCALE GENOMIC DNA]</scope>
    <source>
        <strain>ATCC 824 / DSM 792 / JCM 1419 / IAM 19013 / LMG 5710 / NBRC 13948 / NRRL B-527 / VKM B-1787 / 2291 / W</strain>
    </source>
</reference>
<dbReference type="EC" id="5.3.1.1" evidence="1"/>
<dbReference type="EMBL" id="AF043386">
    <property type="protein sequence ID" value="AAC13162.1"/>
    <property type="molecule type" value="Genomic_DNA"/>
</dbReference>
<dbReference type="EMBL" id="AE001437">
    <property type="protein sequence ID" value="AAK78688.1"/>
    <property type="molecule type" value="Genomic_DNA"/>
</dbReference>
<dbReference type="PIR" id="E96987">
    <property type="entry name" value="E96987"/>
</dbReference>
<dbReference type="RefSeq" id="NP_347348.1">
    <property type="nucleotide sequence ID" value="NC_003030.1"/>
</dbReference>
<dbReference type="RefSeq" id="WP_010964030.1">
    <property type="nucleotide sequence ID" value="NC_003030.1"/>
</dbReference>
<dbReference type="SMR" id="O52633"/>
<dbReference type="STRING" id="272562.CA_C0711"/>
<dbReference type="GeneID" id="44997222"/>
<dbReference type="KEGG" id="cac:CA_C0711"/>
<dbReference type="PATRIC" id="fig|272562.8.peg.914"/>
<dbReference type="eggNOG" id="COG0149">
    <property type="taxonomic scope" value="Bacteria"/>
</dbReference>
<dbReference type="HOGENOM" id="CLU_024251_2_3_9"/>
<dbReference type="OrthoDB" id="9809429at2"/>
<dbReference type="UniPathway" id="UPA00109">
    <property type="reaction ID" value="UER00189"/>
</dbReference>
<dbReference type="UniPathway" id="UPA00138"/>
<dbReference type="Proteomes" id="UP000000814">
    <property type="component" value="Chromosome"/>
</dbReference>
<dbReference type="GO" id="GO:0005829">
    <property type="term" value="C:cytosol"/>
    <property type="evidence" value="ECO:0007669"/>
    <property type="project" value="TreeGrafter"/>
</dbReference>
<dbReference type="GO" id="GO:0004807">
    <property type="term" value="F:triose-phosphate isomerase activity"/>
    <property type="evidence" value="ECO:0007669"/>
    <property type="project" value="UniProtKB-UniRule"/>
</dbReference>
<dbReference type="GO" id="GO:0006094">
    <property type="term" value="P:gluconeogenesis"/>
    <property type="evidence" value="ECO:0007669"/>
    <property type="project" value="UniProtKB-UniRule"/>
</dbReference>
<dbReference type="GO" id="GO:0046166">
    <property type="term" value="P:glyceraldehyde-3-phosphate biosynthetic process"/>
    <property type="evidence" value="ECO:0007669"/>
    <property type="project" value="TreeGrafter"/>
</dbReference>
<dbReference type="GO" id="GO:0019563">
    <property type="term" value="P:glycerol catabolic process"/>
    <property type="evidence" value="ECO:0007669"/>
    <property type="project" value="TreeGrafter"/>
</dbReference>
<dbReference type="GO" id="GO:0006096">
    <property type="term" value="P:glycolytic process"/>
    <property type="evidence" value="ECO:0007669"/>
    <property type="project" value="UniProtKB-UniRule"/>
</dbReference>
<dbReference type="CDD" id="cd00311">
    <property type="entry name" value="TIM"/>
    <property type="match status" value="1"/>
</dbReference>
<dbReference type="FunFam" id="3.20.20.70:FF:000016">
    <property type="entry name" value="Triosephosphate isomerase"/>
    <property type="match status" value="1"/>
</dbReference>
<dbReference type="Gene3D" id="3.20.20.70">
    <property type="entry name" value="Aldolase class I"/>
    <property type="match status" value="1"/>
</dbReference>
<dbReference type="HAMAP" id="MF_00147_B">
    <property type="entry name" value="TIM_B"/>
    <property type="match status" value="1"/>
</dbReference>
<dbReference type="InterPro" id="IPR013785">
    <property type="entry name" value="Aldolase_TIM"/>
</dbReference>
<dbReference type="InterPro" id="IPR035990">
    <property type="entry name" value="TIM_sf"/>
</dbReference>
<dbReference type="InterPro" id="IPR022896">
    <property type="entry name" value="TrioseP_Isoase_bac/euk"/>
</dbReference>
<dbReference type="InterPro" id="IPR000652">
    <property type="entry name" value="Triosephosphate_isomerase"/>
</dbReference>
<dbReference type="InterPro" id="IPR020861">
    <property type="entry name" value="Triosephosphate_isomerase_AS"/>
</dbReference>
<dbReference type="NCBIfam" id="TIGR00419">
    <property type="entry name" value="tim"/>
    <property type="match status" value="1"/>
</dbReference>
<dbReference type="PANTHER" id="PTHR21139">
    <property type="entry name" value="TRIOSEPHOSPHATE ISOMERASE"/>
    <property type="match status" value="1"/>
</dbReference>
<dbReference type="PANTHER" id="PTHR21139:SF42">
    <property type="entry name" value="TRIOSEPHOSPHATE ISOMERASE"/>
    <property type="match status" value="1"/>
</dbReference>
<dbReference type="Pfam" id="PF00121">
    <property type="entry name" value="TIM"/>
    <property type="match status" value="1"/>
</dbReference>
<dbReference type="SUPFAM" id="SSF51351">
    <property type="entry name" value="Triosephosphate isomerase (TIM)"/>
    <property type="match status" value="1"/>
</dbReference>
<dbReference type="PROSITE" id="PS00171">
    <property type="entry name" value="TIM_1"/>
    <property type="match status" value="1"/>
</dbReference>
<dbReference type="PROSITE" id="PS51440">
    <property type="entry name" value="TIM_2"/>
    <property type="match status" value="1"/>
</dbReference>
<name>TPIS_CLOAB</name>
<gene>
    <name evidence="1" type="primary">tpiA</name>
    <name type="synonym">tpi</name>
    <name type="ordered locus">CA_C0711</name>
</gene>
<keyword id="KW-0963">Cytoplasm</keyword>
<keyword id="KW-0312">Gluconeogenesis</keyword>
<keyword id="KW-0324">Glycolysis</keyword>
<keyword id="KW-0413">Isomerase</keyword>
<keyword id="KW-1185">Reference proteome</keyword>
<organism>
    <name type="scientific">Clostridium acetobutylicum (strain ATCC 824 / DSM 792 / JCM 1419 / IAM 19013 / LMG 5710 / NBRC 13948 / NRRL B-527 / VKM B-1787 / 2291 / W)</name>
    <dbReference type="NCBI Taxonomy" id="272562"/>
    <lineage>
        <taxon>Bacteria</taxon>
        <taxon>Bacillati</taxon>
        <taxon>Bacillota</taxon>
        <taxon>Clostridia</taxon>
        <taxon>Eubacteriales</taxon>
        <taxon>Clostridiaceae</taxon>
        <taxon>Clostridium</taxon>
    </lineage>
</organism>
<proteinExistence type="inferred from homology"/>
<feature type="chain" id="PRO_0000090209" description="Triosephosphate isomerase">
    <location>
        <begin position="1"/>
        <end position="248"/>
    </location>
</feature>
<feature type="active site" description="Electrophile" evidence="1">
    <location>
        <position position="94"/>
    </location>
</feature>
<feature type="active site" description="Proton acceptor" evidence="1">
    <location>
        <position position="166"/>
    </location>
</feature>
<feature type="binding site" evidence="1">
    <location>
        <begin position="9"/>
        <end position="11"/>
    </location>
    <ligand>
        <name>substrate</name>
    </ligand>
</feature>
<feature type="binding site" evidence="1">
    <location>
        <position position="172"/>
    </location>
    <ligand>
        <name>substrate</name>
    </ligand>
</feature>
<feature type="binding site" evidence="1">
    <location>
        <position position="212"/>
    </location>
    <ligand>
        <name>substrate</name>
    </ligand>
</feature>
<feature type="binding site" evidence="1">
    <location>
        <begin position="233"/>
        <end position="234"/>
    </location>
    <ligand>
        <name>substrate</name>
    </ligand>
</feature>
<comment type="function">
    <text evidence="1">Involved in the gluconeogenesis. Catalyzes stereospecifically the conversion of dihydroxyacetone phosphate (DHAP) to D-glyceraldehyde-3-phosphate (G3P).</text>
</comment>
<comment type="catalytic activity">
    <reaction evidence="1">
        <text>D-glyceraldehyde 3-phosphate = dihydroxyacetone phosphate</text>
        <dbReference type="Rhea" id="RHEA:18585"/>
        <dbReference type="ChEBI" id="CHEBI:57642"/>
        <dbReference type="ChEBI" id="CHEBI:59776"/>
        <dbReference type="EC" id="5.3.1.1"/>
    </reaction>
</comment>
<comment type="pathway">
    <text evidence="1">Carbohydrate biosynthesis; gluconeogenesis.</text>
</comment>
<comment type="pathway">
    <text evidence="1">Carbohydrate degradation; glycolysis; D-glyceraldehyde 3-phosphate from glycerone phosphate: step 1/1.</text>
</comment>
<comment type="subunit">
    <text evidence="1">Homodimer.</text>
</comment>
<comment type="subcellular location">
    <subcellularLocation>
        <location evidence="1">Cytoplasm</location>
    </subcellularLocation>
</comment>
<comment type="similarity">
    <text evidence="1">Belongs to the triosephosphate isomerase family.</text>
</comment>
<protein>
    <recommendedName>
        <fullName evidence="1">Triosephosphate isomerase</fullName>
        <shortName evidence="1">TIM</shortName>
        <shortName evidence="1">TPI</shortName>
        <ecNumber evidence="1">5.3.1.1</ecNumber>
    </recommendedName>
    <alternativeName>
        <fullName evidence="1">Triose-phosphate isomerase</fullName>
    </alternativeName>
</protein>
<accession>O52633</accession>
<sequence length="248" mass="26543">MRTPIIAGNWKMNNTISESLKLIEELKPLVKDAKAEVVVAPTAVSLETVVNATKGSNIKVAAQNAHFEESGAFTGEISLKALEELGVSYVILGHSERRQYFNETDCALNKKVKAAFAHNITPILCCGETLEEREANVTNEVTGKQIKLDLAGLSAEQAAKVVIAYEPIWAIGTGKTATDEQANETIGAIRKTVEVMFGKEVAEKVRIQYGGSVKPNTIKAQMAKPEIDGALVGGASLKAADFAAIVNF</sequence>